<keyword id="KW-0227">DNA damage</keyword>
<keyword id="KW-0234">DNA repair</keyword>
<keyword id="KW-0479">Metal-binding</keyword>
<keyword id="KW-0539">Nucleus</keyword>
<keyword id="KW-1185">Reference proteome</keyword>
<keyword id="KW-0804">Transcription</keyword>
<keyword id="KW-0805">Transcription regulation</keyword>
<keyword id="KW-0862">Zinc</keyword>
<keyword id="KW-0863">Zinc-finger</keyword>
<reference key="1">
    <citation type="journal article" date="2000" name="Yeast">
        <title>A 38 kb segment containing the cdc2 gene from the left arm of fission yeast chromosome II: sequence analysis and characterization of the genomic DNA and cDNAs encoded on the segment.</title>
        <authorList>
            <person name="Machida M."/>
            <person name="Yamazaki S."/>
            <person name="Kunihiro S."/>
            <person name="Tanaka T."/>
            <person name="Kushida N."/>
            <person name="Jinno K."/>
            <person name="Haikawa Y."/>
            <person name="Yamazaki J."/>
            <person name="Yamamoto S."/>
            <person name="Sekine M."/>
            <person name="Oguchi A."/>
            <person name="Nagai Y."/>
            <person name="Sakai M."/>
            <person name="Aoki K."/>
            <person name="Ogura K."/>
            <person name="Kudoh Y."/>
            <person name="Kikuchi H."/>
            <person name="Zhang M.Q."/>
            <person name="Yanagida M."/>
        </authorList>
    </citation>
    <scope>NUCLEOTIDE SEQUENCE [LARGE SCALE GENOMIC DNA]</scope>
    <source>
        <strain>972 / ATCC 24843</strain>
    </source>
</reference>
<reference key="2">
    <citation type="journal article" date="2002" name="Nature">
        <title>The genome sequence of Schizosaccharomyces pombe.</title>
        <authorList>
            <person name="Wood V."/>
            <person name="Gwilliam R."/>
            <person name="Rajandream M.A."/>
            <person name="Lyne M.H."/>
            <person name="Lyne R."/>
            <person name="Stewart A."/>
            <person name="Sgouros J.G."/>
            <person name="Peat N."/>
            <person name="Hayles J."/>
            <person name="Baker S.G."/>
            <person name="Basham D."/>
            <person name="Bowman S."/>
            <person name="Brooks K."/>
            <person name="Brown D."/>
            <person name="Brown S."/>
            <person name="Chillingworth T."/>
            <person name="Churcher C.M."/>
            <person name="Collins M."/>
            <person name="Connor R."/>
            <person name="Cronin A."/>
            <person name="Davis P."/>
            <person name="Feltwell T."/>
            <person name="Fraser A."/>
            <person name="Gentles S."/>
            <person name="Goble A."/>
            <person name="Hamlin N."/>
            <person name="Harris D.E."/>
            <person name="Hidalgo J."/>
            <person name="Hodgson G."/>
            <person name="Holroyd S."/>
            <person name="Hornsby T."/>
            <person name="Howarth S."/>
            <person name="Huckle E.J."/>
            <person name="Hunt S."/>
            <person name="Jagels K."/>
            <person name="James K.D."/>
            <person name="Jones L."/>
            <person name="Jones M."/>
            <person name="Leather S."/>
            <person name="McDonald S."/>
            <person name="McLean J."/>
            <person name="Mooney P."/>
            <person name="Moule S."/>
            <person name="Mungall K.L."/>
            <person name="Murphy L.D."/>
            <person name="Niblett D."/>
            <person name="Odell C."/>
            <person name="Oliver K."/>
            <person name="O'Neil S."/>
            <person name="Pearson D."/>
            <person name="Quail M.A."/>
            <person name="Rabbinowitsch E."/>
            <person name="Rutherford K.M."/>
            <person name="Rutter S."/>
            <person name="Saunders D."/>
            <person name="Seeger K."/>
            <person name="Sharp S."/>
            <person name="Skelton J."/>
            <person name="Simmonds M.N."/>
            <person name="Squares R."/>
            <person name="Squares S."/>
            <person name="Stevens K."/>
            <person name="Taylor K."/>
            <person name="Taylor R.G."/>
            <person name="Tivey A."/>
            <person name="Walsh S.V."/>
            <person name="Warren T."/>
            <person name="Whitehead S."/>
            <person name="Woodward J.R."/>
            <person name="Volckaert G."/>
            <person name="Aert R."/>
            <person name="Robben J."/>
            <person name="Grymonprez B."/>
            <person name="Weltjens I."/>
            <person name="Vanstreels E."/>
            <person name="Rieger M."/>
            <person name="Schaefer M."/>
            <person name="Mueller-Auer S."/>
            <person name="Gabel C."/>
            <person name="Fuchs M."/>
            <person name="Duesterhoeft A."/>
            <person name="Fritzc C."/>
            <person name="Holzer E."/>
            <person name="Moestl D."/>
            <person name="Hilbert H."/>
            <person name="Borzym K."/>
            <person name="Langer I."/>
            <person name="Beck A."/>
            <person name="Lehrach H."/>
            <person name="Reinhardt R."/>
            <person name="Pohl T.M."/>
            <person name="Eger P."/>
            <person name="Zimmermann W."/>
            <person name="Wedler H."/>
            <person name="Wambutt R."/>
            <person name="Purnelle B."/>
            <person name="Goffeau A."/>
            <person name="Cadieu E."/>
            <person name="Dreano S."/>
            <person name="Gloux S."/>
            <person name="Lelaure V."/>
            <person name="Mottier S."/>
            <person name="Galibert F."/>
            <person name="Aves S.J."/>
            <person name="Xiang Z."/>
            <person name="Hunt C."/>
            <person name="Moore K."/>
            <person name="Hurst S.M."/>
            <person name="Lucas M."/>
            <person name="Rochet M."/>
            <person name="Gaillardin C."/>
            <person name="Tallada V.A."/>
            <person name="Garzon A."/>
            <person name="Thode G."/>
            <person name="Daga R.R."/>
            <person name="Cruzado L."/>
            <person name="Jimenez J."/>
            <person name="Sanchez M."/>
            <person name="del Rey F."/>
            <person name="Benito J."/>
            <person name="Dominguez A."/>
            <person name="Revuelta J.L."/>
            <person name="Moreno S."/>
            <person name="Armstrong J."/>
            <person name="Forsburg S.L."/>
            <person name="Cerutti L."/>
            <person name="Lowe T."/>
            <person name="McCombie W.R."/>
            <person name="Paulsen I."/>
            <person name="Potashkin J."/>
            <person name="Shpakovski G.V."/>
            <person name="Ussery D."/>
            <person name="Barrell B.G."/>
            <person name="Nurse P."/>
        </authorList>
    </citation>
    <scope>NUCLEOTIDE SEQUENCE [LARGE SCALE GENOMIC DNA]</scope>
    <source>
        <strain>972 / ATCC 24843</strain>
    </source>
</reference>
<reference key="3">
    <citation type="journal article" date="2003" name="J. Biol. Chem.">
        <title>Mediator influences Schizosaccharomyces pombe RNA polymerase II-dependent transcription in vitro.</title>
        <authorList>
            <person name="Spaehr H."/>
            <person name="Khorosjutina O."/>
            <person name="Baraznenok V."/>
            <person name="Linder T."/>
            <person name="Samuelsen C.O."/>
            <person name="Hermand D."/>
            <person name="Maekelae T.P."/>
            <person name="Holmberg S."/>
            <person name="Gustafsson C.M."/>
        </authorList>
    </citation>
    <scope>SUBUNIT</scope>
</reference>
<organism>
    <name type="scientific">Schizosaccharomyces pombe (strain 972 / ATCC 24843)</name>
    <name type="common">Fission yeast</name>
    <dbReference type="NCBI Taxonomy" id="284812"/>
    <lineage>
        <taxon>Eukaryota</taxon>
        <taxon>Fungi</taxon>
        <taxon>Dikarya</taxon>
        <taxon>Ascomycota</taxon>
        <taxon>Taphrinomycotina</taxon>
        <taxon>Schizosaccharomycetes</taxon>
        <taxon>Schizosaccharomycetales</taxon>
        <taxon>Schizosaccharomycetaceae</taxon>
        <taxon>Schizosaccharomyces</taxon>
    </lineage>
</organism>
<evidence type="ECO:0000250" key="1"/>
<evidence type="ECO:0000250" key="2">
    <source>
        <dbReference type="UniProtKB" id="Q12004"/>
    </source>
</evidence>
<evidence type="ECO:0000269" key="3">
    <source>
    </source>
</evidence>
<evidence type="ECO:0000305" key="4"/>
<protein>
    <recommendedName>
        <fullName>General transcription and DNA repair factor IIH subunit tfb4</fullName>
        <shortName>TFIIH subunit tfb4</shortName>
    </recommendedName>
    <alternativeName>
        <fullName>RNA polymerase II transcription factor B subunit 4</fullName>
    </alternativeName>
</protein>
<gene>
    <name type="primary">tfb4</name>
    <name type="ORF">pi078</name>
    <name type="ORF">SPBC30B4.07c</name>
</gene>
<proteinExistence type="evidence at protein level"/>
<accession>O74366</accession>
<accession>O13669</accession>
<comment type="function">
    <text evidence="2">Component of the general transcription and DNA repair factor IIH (TFIIH) core complex, which is involved in general and transcription-coupled nucleotide excision repair (NER) of damaged DNA and, when complexed to TFIIK, in RNA transcription by RNA polymerase II. In NER, TFIIH acts by opening DNA around the lesion to allow the excision of the damaged oligonucleotide and its replacement by a new DNA fragment. In transcription, TFIIH has an essential role in transcription initiation. When the pre-initiation complex (PIC) has been established, TFIIH is required for promoter opening and promoter escape. Phosphorylation of the C-terminal tail (CTD) of the largest subunit of RNA polymerase II by the kinase module TFIIK controls the initiation of transcription.</text>
</comment>
<comment type="subunit">
    <text evidence="3">Component of the 7-subunit TFIIH core complex composed of XPB/ptr8, XPD/rad15, ssl1, tfb1, tfb2, tfb4 and tfb5, which is active in NER. The core complex associates with the 3-subunit CTD-kinase module TFIIK composed of mcs2/cyclin H, mcs6/cdk7 and pmh1/tfb3 to form the 10-subunit holoenzyme (holo-TFIIH) active in transcription.</text>
</comment>
<comment type="subcellular location">
    <subcellularLocation>
        <location evidence="1">Nucleus</location>
    </subcellularLocation>
</comment>
<comment type="similarity">
    <text evidence="4">Belongs to the TFB4 family.</text>
</comment>
<feature type="chain" id="PRO_0000119273" description="General transcription and DNA repair factor IIH subunit tfb4">
    <location>
        <begin position="1"/>
        <end position="297"/>
    </location>
</feature>
<feature type="zinc finger region" description="C4-type">
    <location>
        <begin position="265"/>
        <end position="282"/>
    </location>
</feature>
<feature type="sequence conflict" description="In Ref. 1; BAA21460." evidence="4" ref="1">
    <original>VEPMSKKLHT</original>
    <variation>DQTISLRGIHK</variation>
    <location>
        <begin position="288"/>
        <end position="297"/>
    </location>
</feature>
<sequence>MDEFQTLKQNASWDISEDANDTPSLLVVILDANPASWYSLSKKVPVSKVLADITVFLNAHLAFHHDNRVAVLASHSDKVEYLYPSIAPEQKVAEVDPTKEANTYRKFREVDDLVLSGMKRLMSSTDKVSRKTMISGALSRALAYINQVQNKNTLRSRILIFSLTGDVALQYIPTMNCIFCAQKKNIPINVCNIEGGTLFLEQAADATGGIYLKVDNPKGLLQYLMMSLFPDQNLRKHLNTPNQANVDFRATCFCHKKVLDIGFVCSVCLSIFCEPRVHCSTCHTKFTVEPMSKKLHT</sequence>
<dbReference type="EMBL" id="AB004539">
    <property type="protein sequence ID" value="BAA21460.1"/>
    <property type="molecule type" value="Genomic_DNA"/>
</dbReference>
<dbReference type="EMBL" id="CU329671">
    <property type="protein sequence ID" value="CAA20320.1"/>
    <property type="molecule type" value="Genomic_DNA"/>
</dbReference>
<dbReference type="PIR" id="T40173">
    <property type="entry name" value="T40173"/>
</dbReference>
<dbReference type="RefSeq" id="NP_595532.1">
    <property type="nucleotide sequence ID" value="NM_001021442.2"/>
</dbReference>
<dbReference type="SMR" id="O74366"/>
<dbReference type="BioGRID" id="276872">
    <property type="interactions" value="2"/>
</dbReference>
<dbReference type="FunCoup" id="O74366">
    <property type="interactions" value="919"/>
</dbReference>
<dbReference type="IntAct" id="O74366">
    <property type="interactions" value="1"/>
</dbReference>
<dbReference type="STRING" id="284812.O74366"/>
<dbReference type="PaxDb" id="4896-SPBC30B4.07c.1"/>
<dbReference type="EnsemblFungi" id="SPBC30B4.07c.1">
    <property type="protein sequence ID" value="SPBC30B4.07c.1:pep"/>
    <property type="gene ID" value="SPBC30B4.07c"/>
</dbReference>
<dbReference type="GeneID" id="2540343"/>
<dbReference type="KEGG" id="spo:2540343"/>
<dbReference type="PomBase" id="SPBC30B4.07c">
    <property type="gene designation" value="tfb4"/>
</dbReference>
<dbReference type="VEuPathDB" id="FungiDB:SPBC30B4.07c"/>
<dbReference type="eggNOG" id="KOG2487">
    <property type="taxonomic scope" value="Eukaryota"/>
</dbReference>
<dbReference type="HOGENOM" id="CLU_040211_0_0_1"/>
<dbReference type="InParanoid" id="O74366"/>
<dbReference type="OMA" id="DYRASCH"/>
<dbReference type="PhylomeDB" id="O74366"/>
<dbReference type="Reactome" id="R-SPO-113418">
    <property type="pathway name" value="Formation of the Early Elongation Complex"/>
</dbReference>
<dbReference type="Reactome" id="R-SPO-5696395">
    <property type="pathway name" value="Formation of Incision Complex in GG-NER"/>
</dbReference>
<dbReference type="Reactome" id="R-SPO-5696400">
    <property type="pathway name" value="Dual Incision in GG-NER"/>
</dbReference>
<dbReference type="Reactome" id="R-SPO-674695">
    <property type="pathway name" value="RNA Polymerase II Pre-transcription Events"/>
</dbReference>
<dbReference type="Reactome" id="R-SPO-6781823">
    <property type="pathway name" value="Formation of TC-NER Pre-Incision Complex"/>
</dbReference>
<dbReference type="Reactome" id="R-SPO-6782135">
    <property type="pathway name" value="Dual incision in TC-NER"/>
</dbReference>
<dbReference type="Reactome" id="R-SPO-6782210">
    <property type="pathway name" value="Gap-filling DNA repair synthesis and ligation in TC-NER"/>
</dbReference>
<dbReference type="Reactome" id="R-SPO-6796648">
    <property type="pathway name" value="TP53 Regulates Transcription of DNA Repair Genes"/>
</dbReference>
<dbReference type="Reactome" id="R-SPO-72086">
    <property type="pathway name" value="mRNA Capping"/>
</dbReference>
<dbReference type="Reactome" id="R-SPO-73772">
    <property type="pathway name" value="RNA Polymerase I Promoter Escape"/>
</dbReference>
<dbReference type="Reactome" id="R-SPO-73776">
    <property type="pathway name" value="RNA Polymerase II Promoter Escape"/>
</dbReference>
<dbReference type="Reactome" id="R-SPO-73779">
    <property type="pathway name" value="RNA Polymerase II Transcription Pre-Initiation And Promoter Opening"/>
</dbReference>
<dbReference type="Reactome" id="R-SPO-75953">
    <property type="pathway name" value="RNA Polymerase II Transcription Initiation"/>
</dbReference>
<dbReference type="Reactome" id="R-SPO-76042">
    <property type="pathway name" value="RNA Polymerase II Transcription Initiation And Promoter Clearance"/>
</dbReference>
<dbReference type="Reactome" id="R-SPO-77075">
    <property type="pathway name" value="RNA Pol II CTD phosphorylation and interaction with CE"/>
</dbReference>
<dbReference type="PRO" id="PR:O74366"/>
<dbReference type="Proteomes" id="UP000002485">
    <property type="component" value="Chromosome II"/>
</dbReference>
<dbReference type="GO" id="GO:0005829">
    <property type="term" value="C:cytosol"/>
    <property type="evidence" value="ECO:0007005"/>
    <property type="project" value="PomBase"/>
</dbReference>
<dbReference type="GO" id="GO:0005634">
    <property type="term" value="C:nucleus"/>
    <property type="evidence" value="ECO:0007005"/>
    <property type="project" value="PomBase"/>
</dbReference>
<dbReference type="GO" id="GO:0000439">
    <property type="term" value="C:transcription factor TFIIH core complex"/>
    <property type="evidence" value="ECO:0000318"/>
    <property type="project" value="GO_Central"/>
</dbReference>
<dbReference type="GO" id="GO:0005675">
    <property type="term" value="C:transcription factor TFIIH holo complex"/>
    <property type="evidence" value="ECO:0000318"/>
    <property type="project" value="GO_Central"/>
</dbReference>
<dbReference type="GO" id="GO:0016251">
    <property type="term" value="F:RNA polymerase II general transcription initiation factor activity"/>
    <property type="evidence" value="ECO:0000269"/>
    <property type="project" value="PomBase"/>
</dbReference>
<dbReference type="GO" id="GO:0008270">
    <property type="term" value="F:zinc ion binding"/>
    <property type="evidence" value="ECO:0007669"/>
    <property type="project" value="UniProtKB-KW"/>
</dbReference>
<dbReference type="GO" id="GO:0006289">
    <property type="term" value="P:nucleotide-excision repair"/>
    <property type="evidence" value="ECO:0000318"/>
    <property type="project" value="GO_Central"/>
</dbReference>
<dbReference type="GO" id="GO:0006355">
    <property type="term" value="P:regulation of DNA-templated transcription"/>
    <property type="evidence" value="ECO:0007669"/>
    <property type="project" value="InterPro"/>
</dbReference>
<dbReference type="GO" id="GO:0006367">
    <property type="term" value="P:transcription initiation at RNA polymerase II promoter"/>
    <property type="evidence" value="ECO:0000269"/>
    <property type="project" value="PomBase"/>
</dbReference>
<dbReference type="Gene3D" id="3.40.50.410">
    <property type="entry name" value="von Willebrand factor, type A domain"/>
    <property type="match status" value="1"/>
</dbReference>
<dbReference type="InterPro" id="IPR004600">
    <property type="entry name" value="TFIIH_Tfb4/GTF2H3"/>
</dbReference>
<dbReference type="InterPro" id="IPR036465">
    <property type="entry name" value="vWFA_dom_sf"/>
</dbReference>
<dbReference type="NCBIfam" id="TIGR00627">
    <property type="entry name" value="tfb4"/>
    <property type="match status" value="1"/>
</dbReference>
<dbReference type="PANTHER" id="PTHR12831:SF0">
    <property type="entry name" value="GENERAL TRANSCRIPTION FACTOR IIH SUBUNIT 3"/>
    <property type="match status" value="1"/>
</dbReference>
<dbReference type="PANTHER" id="PTHR12831">
    <property type="entry name" value="TRANSCRIPTION INITIATION FACTOR IIH TFIIH , POLYPEPTIDE 3-RELATED"/>
    <property type="match status" value="1"/>
</dbReference>
<dbReference type="Pfam" id="PF03850">
    <property type="entry name" value="Tfb4"/>
    <property type="match status" value="1"/>
</dbReference>
<name>TFB4_SCHPO</name>